<organism>
    <name type="scientific">Devario pathirana</name>
    <name type="common">Barred danio</name>
    <name type="synonym">Danio pathirana</name>
    <dbReference type="NCBI Taxonomy" id="46779"/>
    <lineage>
        <taxon>Eukaryota</taxon>
        <taxon>Metazoa</taxon>
        <taxon>Chordata</taxon>
        <taxon>Craniata</taxon>
        <taxon>Vertebrata</taxon>
        <taxon>Euteleostomi</taxon>
        <taxon>Actinopterygii</taxon>
        <taxon>Neopterygii</taxon>
        <taxon>Teleostei</taxon>
        <taxon>Ostariophysi</taxon>
        <taxon>Cypriniformes</taxon>
        <taxon>Danionidae</taxon>
        <taxon>Danioninae</taxon>
        <taxon>Devario</taxon>
    </lineage>
</organism>
<name>SHH_DEVPA</name>
<accession>O13250</accession>
<accession>O13218</accession>
<accession>O13219</accession>
<accession>O13251</accession>
<comment type="function">
    <text evidence="1">Intercellular signal essential for a variety of patterning events during development. Signal produced by the notochord that induces somite patterning, dorso-ventral patterning of the brain and early patterning of the developing eyes. Displays floor plate-inducing activity. Binds to the patched (PTC) receptor, which functions in association with smoothened (SMO), to activate the transcription of target genes. In the absence of SHH, PTC represses the constitutive signaling activity of SMO (By similarity).</text>
</comment>
<comment type="subunit">
    <text evidence="1">N-product is active as a multimer.</text>
</comment>
<comment type="subcellular location">
    <subcellularLocation>
        <location evidence="1">Secreted</location>
    </subcellularLocation>
    <subcellularLocation>
        <location evidence="1">Cell membrane</location>
    </subcellularLocation>
    <text evidence="1">Sonic hedgehog protein C-product: Secreted, extracellular space. Sonic hedgehog protein N-product: Cell membrane; Lipid-anchor. The C-terminal peptide diffuses from the cell, while the N-product either remains associated with lipid rafts at the cell surface, or forms freely diffusible active multimers with its hydrophobic lipid-modified N- and C-termini buried inside.</text>
</comment>
<comment type="domain">
    <text evidence="1">The sonic hedgehog protein N-product binds calcium and zinc ions; this stabilizes the protein fold and is essential for protein-protein interactions mediated by this domain.</text>
</comment>
<comment type="PTM">
    <text>The C-terminal domain displays an autoproteolysis activity and a cholesterol transferase activity. Both activities result in the cleavage of the full-length protein and covalent attachment of a cholesterol moiety to the C-terminal of the newly generated N-terminal fragment (N-product). The N-product is the active species in both local and long-range signaling, whereas the C-product has no signaling activity.</text>
</comment>
<comment type="PTM">
    <text evidence="1">Cholesterylation is required for N-product targeting to lipid rafts and multimerization.</text>
</comment>
<comment type="PTM">
    <text evidence="1">N-palmitoylation is required for N-product multimerization and full activity.</text>
</comment>
<comment type="similarity">
    <text evidence="3">Belongs to the hedgehog family.</text>
</comment>
<reference key="1">
    <citation type="journal article" date="1996" name="Proc. Natl. Acad. Sci. U.S.A.">
        <title>Evolutionary analyses of hedgehog and Hoxd-10 genes in fish species closely related to the zebrafish.</title>
        <authorList>
            <person name="Zardoya R."/>
            <person name="Abouheif E."/>
            <person name="Meyer A."/>
        </authorList>
    </citation>
    <scope>NUCLEOTIDE SEQUENCE [GENOMIC DNA]</scope>
    <source>
        <tissue>Muscle</tissue>
    </source>
</reference>
<proteinExistence type="inferred from homology"/>
<keyword id="KW-0068">Autocatalytic cleavage</keyword>
<keyword id="KW-0106">Calcium</keyword>
<keyword id="KW-1003">Cell membrane</keyword>
<keyword id="KW-0217">Developmental protein</keyword>
<keyword id="KW-0378">Hydrolase</keyword>
<keyword id="KW-0449">Lipoprotein</keyword>
<keyword id="KW-0472">Membrane</keyword>
<keyword id="KW-0479">Metal-binding</keyword>
<keyword id="KW-0564">Palmitate</keyword>
<keyword id="KW-0645">Protease</keyword>
<keyword id="KW-0964">Secreted</keyword>
<keyword id="KW-0862">Zinc</keyword>
<sequence length="121" mass="14012">YGRRRHPKKLTPLAYKQFIPNVAEKTLGASGRYEGKITRNSERFKELTPNYNPDIIFKDEENTVMNHWPGVKLRVTEGWDEDGHHFEESLHYEGRAVDITTSDRDKSKYGTLSRLAVEAGF</sequence>
<gene>
    <name type="primary">shh</name>
</gene>
<protein>
    <recommendedName>
        <fullName>Sonic hedgehog protein</fullName>
        <shortName>SHH</shortName>
    </recommendedName>
</protein>
<feature type="chain" id="PRO_0000058731" description="Sonic hedgehog protein">
    <location>
        <begin position="1" status="less than"/>
        <end position="121" status="greater than"/>
    </location>
</feature>
<feature type="binding site" evidence="2">
    <location>
        <position position="60"/>
    </location>
    <ligand>
        <name>Ca(2+)</name>
        <dbReference type="ChEBI" id="CHEBI:29108"/>
        <label>1</label>
    </ligand>
</feature>
<feature type="binding site" evidence="2">
    <location>
        <position position="61"/>
    </location>
    <ligand>
        <name>Ca(2+)</name>
        <dbReference type="ChEBI" id="CHEBI:29108"/>
        <label>1</label>
    </ligand>
</feature>
<feature type="binding site" evidence="2">
    <location>
        <position position="61"/>
    </location>
    <ligand>
        <name>Ca(2+)</name>
        <dbReference type="ChEBI" id="CHEBI:29108"/>
        <label>2</label>
    </ligand>
</feature>
<feature type="binding site" evidence="2">
    <location>
        <position position="76"/>
    </location>
    <ligand>
        <name>Ca(2+)</name>
        <dbReference type="ChEBI" id="CHEBI:29108"/>
        <label>1</label>
    </ligand>
</feature>
<feature type="binding site" evidence="2">
    <location>
        <position position="77"/>
    </location>
    <ligand>
        <name>Ca(2+)</name>
        <dbReference type="ChEBI" id="CHEBI:29108"/>
        <label>1</label>
    </ligand>
</feature>
<feature type="binding site" evidence="2">
    <location>
        <position position="77"/>
    </location>
    <ligand>
        <name>Ca(2+)</name>
        <dbReference type="ChEBI" id="CHEBI:29108"/>
        <label>2</label>
    </ligand>
</feature>
<feature type="binding site" evidence="2">
    <location>
        <position position="80"/>
    </location>
    <ligand>
        <name>Ca(2+)</name>
        <dbReference type="ChEBI" id="CHEBI:29108"/>
        <label>2</label>
    </ligand>
</feature>
<feature type="binding site" evidence="2">
    <location>
        <position position="82"/>
    </location>
    <ligand>
        <name>Ca(2+)</name>
        <dbReference type="ChEBI" id="CHEBI:29108"/>
        <label>2</label>
    </ligand>
</feature>
<feature type="binding site" evidence="2">
    <location>
        <position position="91"/>
    </location>
    <ligand>
        <name>Zn(2+)</name>
        <dbReference type="ChEBI" id="CHEBI:29105"/>
    </ligand>
</feature>
<feature type="binding site" evidence="2">
    <location>
        <position position="98"/>
    </location>
    <ligand>
        <name>Zn(2+)</name>
        <dbReference type="ChEBI" id="CHEBI:29105"/>
    </ligand>
</feature>
<feature type="non-consecutive residues" evidence="3">
    <location>
        <begin position="63"/>
        <end position="64"/>
    </location>
</feature>
<feature type="non-terminal residue">
    <location>
        <position position="1"/>
    </location>
</feature>
<feature type="non-terminal residue">
    <location>
        <position position="121"/>
    </location>
</feature>
<evidence type="ECO:0000250" key="1"/>
<evidence type="ECO:0000250" key="2">
    <source>
        <dbReference type="UniProtKB" id="Q15465"/>
    </source>
</evidence>
<evidence type="ECO:0000305" key="3"/>
<dbReference type="EMBL" id="U51345">
    <property type="protein sequence ID" value="AAB38574.1"/>
    <property type="molecule type" value="Genomic_DNA"/>
</dbReference>
<dbReference type="EMBL" id="U51364">
    <property type="protein sequence ID" value="AAB38592.1"/>
    <property type="molecule type" value="Genomic_DNA"/>
</dbReference>
<dbReference type="SMR" id="O13250"/>
<dbReference type="GO" id="GO:0005615">
    <property type="term" value="C:extracellular space"/>
    <property type="evidence" value="ECO:0007669"/>
    <property type="project" value="TreeGrafter"/>
</dbReference>
<dbReference type="GO" id="GO:0005886">
    <property type="term" value="C:plasma membrane"/>
    <property type="evidence" value="ECO:0007669"/>
    <property type="project" value="UniProtKB-SubCell"/>
</dbReference>
<dbReference type="GO" id="GO:0005509">
    <property type="term" value="F:calcium ion binding"/>
    <property type="evidence" value="ECO:0007669"/>
    <property type="project" value="TreeGrafter"/>
</dbReference>
<dbReference type="GO" id="GO:0005113">
    <property type="term" value="F:patched binding"/>
    <property type="evidence" value="ECO:0007669"/>
    <property type="project" value="TreeGrafter"/>
</dbReference>
<dbReference type="GO" id="GO:0008233">
    <property type="term" value="F:peptidase activity"/>
    <property type="evidence" value="ECO:0007669"/>
    <property type="project" value="UniProtKB-KW"/>
</dbReference>
<dbReference type="GO" id="GO:0048513">
    <property type="term" value="P:animal organ development"/>
    <property type="evidence" value="ECO:0007669"/>
    <property type="project" value="UniProtKB-ARBA"/>
</dbReference>
<dbReference type="GO" id="GO:0048468">
    <property type="term" value="P:cell development"/>
    <property type="evidence" value="ECO:0007669"/>
    <property type="project" value="UniProtKB-ARBA"/>
</dbReference>
<dbReference type="GO" id="GO:0001708">
    <property type="term" value="P:cell fate specification"/>
    <property type="evidence" value="ECO:0007669"/>
    <property type="project" value="TreeGrafter"/>
</dbReference>
<dbReference type="GO" id="GO:0007267">
    <property type="term" value="P:cell-cell signaling"/>
    <property type="evidence" value="ECO:0007669"/>
    <property type="project" value="InterPro"/>
</dbReference>
<dbReference type="GO" id="GO:0007417">
    <property type="term" value="P:central nervous system development"/>
    <property type="evidence" value="ECO:0007669"/>
    <property type="project" value="UniProtKB-ARBA"/>
</dbReference>
<dbReference type="GO" id="GO:0030182">
    <property type="term" value="P:neuron differentiation"/>
    <property type="evidence" value="ECO:0007669"/>
    <property type="project" value="UniProtKB-ARBA"/>
</dbReference>
<dbReference type="GO" id="GO:0006508">
    <property type="term" value="P:proteolysis"/>
    <property type="evidence" value="ECO:0007669"/>
    <property type="project" value="UniProtKB-KW"/>
</dbReference>
<dbReference type="GO" id="GO:0010468">
    <property type="term" value="P:regulation of gene expression"/>
    <property type="evidence" value="ECO:0007669"/>
    <property type="project" value="TreeGrafter"/>
</dbReference>
<dbReference type="GO" id="GO:0007224">
    <property type="term" value="P:smoothened signaling pathway"/>
    <property type="evidence" value="ECO:0007669"/>
    <property type="project" value="TreeGrafter"/>
</dbReference>
<dbReference type="GO" id="GO:0009888">
    <property type="term" value="P:tissue development"/>
    <property type="evidence" value="ECO:0007669"/>
    <property type="project" value="UniProtKB-ARBA"/>
</dbReference>
<dbReference type="Gene3D" id="3.30.1380.10">
    <property type="match status" value="1"/>
</dbReference>
<dbReference type="InterPro" id="IPR001657">
    <property type="entry name" value="Hedgehog"/>
</dbReference>
<dbReference type="InterPro" id="IPR009045">
    <property type="entry name" value="Hedgehog_sig/DD-Pept_Zn-bd_sf"/>
</dbReference>
<dbReference type="InterPro" id="IPR050387">
    <property type="entry name" value="Hedgehog_Signaling"/>
</dbReference>
<dbReference type="InterPro" id="IPR000320">
    <property type="entry name" value="Hedgehog_signalling_dom"/>
</dbReference>
<dbReference type="PANTHER" id="PTHR11889">
    <property type="entry name" value="HEDGEHOG"/>
    <property type="match status" value="1"/>
</dbReference>
<dbReference type="PANTHER" id="PTHR11889:SF36">
    <property type="entry name" value="SONIC HEDGEHOG PROTEIN"/>
    <property type="match status" value="1"/>
</dbReference>
<dbReference type="Pfam" id="PF01085">
    <property type="entry name" value="HH_signal"/>
    <property type="match status" value="1"/>
</dbReference>
<dbReference type="PRINTS" id="PR00632">
    <property type="entry name" value="SONICHHOG"/>
</dbReference>
<dbReference type="SUPFAM" id="SSF55166">
    <property type="entry name" value="Hedgehog/DD-peptidase"/>
    <property type="match status" value="1"/>
</dbReference>